<organism>
    <name type="scientific">Ruminiclostridium cellulolyticum (strain ATCC 35319 / DSM 5812 / JCM 6584 / H10)</name>
    <name type="common">Clostridium cellulolyticum</name>
    <dbReference type="NCBI Taxonomy" id="394503"/>
    <lineage>
        <taxon>Bacteria</taxon>
        <taxon>Bacillati</taxon>
        <taxon>Bacillota</taxon>
        <taxon>Clostridia</taxon>
        <taxon>Eubacteriales</taxon>
        <taxon>Oscillospiraceae</taxon>
        <taxon>Ruminiclostridium</taxon>
    </lineage>
</organism>
<name>MURD_RUMCH</name>
<sequence length="465" mass="52003">MNNKLEQFKKDVKNKRVAVMGIGVSNIPLIKYLVSFGVDVTAFDKSTEEKLTDAFNELKGLPVKYSLGPDYLSRLNGFDMIFRTPGMRPDLPELVEAVANGAELTSEMEVFLKLCPAQVFAVTGSDGKTTTTTLIYKTLSEEGFKCWLGGNIGTPLLSKIDDVAETDKVILELSSFQLMTIKDCPSVAVITNISPNHLDVHKSLQEYIDAKKNIFINQNENDKLVLNFDNEITKSFNYEARGEYVYFSRLNNINEGVVYQNGRIIVKKENSITEIIEGDKIKIPGVHNIENYMAATAATIDYVKPETIARIASSFNGVEHRIELVRELNGVKFYNSSIDSSPSRTIAALKTFKDKVILIAGGKDKGIPYDSMGEIITEKVKCLLLIGATASRIEEAYKNYLQQRDLENDIKIIHCDTYQEVVQKAHAEAEQGDCIILSPASTSFDMFKNFEHRGNVFKELVNNLK</sequence>
<evidence type="ECO:0000255" key="1">
    <source>
        <dbReference type="HAMAP-Rule" id="MF_00639"/>
    </source>
</evidence>
<comment type="function">
    <text evidence="1">Cell wall formation. Catalyzes the addition of glutamate to the nucleotide precursor UDP-N-acetylmuramoyl-L-alanine (UMA).</text>
</comment>
<comment type="catalytic activity">
    <reaction evidence="1">
        <text>UDP-N-acetyl-alpha-D-muramoyl-L-alanine + D-glutamate + ATP = UDP-N-acetyl-alpha-D-muramoyl-L-alanyl-D-glutamate + ADP + phosphate + H(+)</text>
        <dbReference type="Rhea" id="RHEA:16429"/>
        <dbReference type="ChEBI" id="CHEBI:15378"/>
        <dbReference type="ChEBI" id="CHEBI:29986"/>
        <dbReference type="ChEBI" id="CHEBI:30616"/>
        <dbReference type="ChEBI" id="CHEBI:43474"/>
        <dbReference type="ChEBI" id="CHEBI:83898"/>
        <dbReference type="ChEBI" id="CHEBI:83900"/>
        <dbReference type="ChEBI" id="CHEBI:456216"/>
        <dbReference type="EC" id="6.3.2.9"/>
    </reaction>
</comment>
<comment type="pathway">
    <text evidence="1">Cell wall biogenesis; peptidoglycan biosynthesis.</text>
</comment>
<comment type="subcellular location">
    <subcellularLocation>
        <location evidence="1">Cytoplasm</location>
    </subcellularLocation>
</comment>
<comment type="similarity">
    <text evidence="1">Belongs to the MurCDEF family.</text>
</comment>
<protein>
    <recommendedName>
        <fullName evidence="1">UDP-N-acetylmuramoylalanine--D-glutamate ligase</fullName>
        <ecNumber evidence="1">6.3.2.9</ecNumber>
    </recommendedName>
    <alternativeName>
        <fullName evidence="1">D-glutamic acid-adding enzyme</fullName>
    </alternativeName>
    <alternativeName>
        <fullName evidence="1">UDP-N-acetylmuramoyl-L-alanyl-D-glutamate synthetase</fullName>
    </alternativeName>
</protein>
<gene>
    <name evidence="1" type="primary">murD</name>
    <name type="ordered locus">Ccel_1726</name>
</gene>
<feature type="chain" id="PRO_1000147400" description="UDP-N-acetylmuramoylalanine--D-glutamate ligase">
    <location>
        <begin position="1"/>
        <end position="465"/>
    </location>
</feature>
<feature type="binding site" evidence="1">
    <location>
        <begin position="124"/>
        <end position="130"/>
    </location>
    <ligand>
        <name>ATP</name>
        <dbReference type="ChEBI" id="CHEBI:30616"/>
    </ligand>
</feature>
<reference key="1">
    <citation type="submission" date="2009-01" db="EMBL/GenBank/DDBJ databases">
        <title>Complete sequence of Clostridium cellulolyticum H10.</title>
        <authorList>
            <consortium name="US DOE Joint Genome Institute"/>
            <person name="Lucas S."/>
            <person name="Copeland A."/>
            <person name="Lapidus A."/>
            <person name="Glavina del Rio T."/>
            <person name="Dalin E."/>
            <person name="Tice H."/>
            <person name="Bruce D."/>
            <person name="Goodwin L."/>
            <person name="Pitluck S."/>
            <person name="Chertkov O."/>
            <person name="Saunders E."/>
            <person name="Brettin T."/>
            <person name="Detter J.C."/>
            <person name="Han C."/>
            <person name="Larimer F."/>
            <person name="Land M."/>
            <person name="Hauser L."/>
            <person name="Kyrpides N."/>
            <person name="Ivanova N."/>
            <person name="Zhou J."/>
            <person name="Richardson P."/>
        </authorList>
    </citation>
    <scope>NUCLEOTIDE SEQUENCE [LARGE SCALE GENOMIC DNA]</scope>
    <source>
        <strain>ATCC 35319 / DSM 5812 / JCM 6584 / H10</strain>
    </source>
</reference>
<proteinExistence type="inferred from homology"/>
<keyword id="KW-0067">ATP-binding</keyword>
<keyword id="KW-0131">Cell cycle</keyword>
<keyword id="KW-0132">Cell division</keyword>
<keyword id="KW-0133">Cell shape</keyword>
<keyword id="KW-0961">Cell wall biogenesis/degradation</keyword>
<keyword id="KW-0963">Cytoplasm</keyword>
<keyword id="KW-0436">Ligase</keyword>
<keyword id="KW-0547">Nucleotide-binding</keyword>
<keyword id="KW-0573">Peptidoglycan synthesis</keyword>
<keyword id="KW-1185">Reference proteome</keyword>
<accession>B8I2T4</accession>
<dbReference type="EC" id="6.3.2.9" evidence="1"/>
<dbReference type="EMBL" id="CP001348">
    <property type="protein sequence ID" value="ACL76077.1"/>
    <property type="molecule type" value="Genomic_DNA"/>
</dbReference>
<dbReference type="RefSeq" id="WP_015925192.1">
    <property type="nucleotide sequence ID" value="NC_011898.1"/>
</dbReference>
<dbReference type="SMR" id="B8I2T4"/>
<dbReference type="STRING" id="394503.Ccel_1726"/>
<dbReference type="KEGG" id="cce:Ccel_1726"/>
<dbReference type="eggNOG" id="COG0771">
    <property type="taxonomic scope" value="Bacteria"/>
</dbReference>
<dbReference type="HOGENOM" id="CLU_032540_0_1_9"/>
<dbReference type="OrthoDB" id="9809796at2"/>
<dbReference type="UniPathway" id="UPA00219"/>
<dbReference type="Proteomes" id="UP000001349">
    <property type="component" value="Chromosome"/>
</dbReference>
<dbReference type="GO" id="GO:0005737">
    <property type="term" value="C:cytoplasm"/>
    <property type="evidence" value="ECO:0007669"/>
    <property type="project" value="UniProtKB-SubCell"/>
</dbReference>
<dbReference type="GO" id="GO:0005524">
    <property type="term" value="F:ATP binding"/>
    <property type="evidence" value="ECO:0007669"/>
    <property type="project" value="UniProtKB-UniRule"/>
</dbReference>
<dbReference type="GO" id="GO:0008764">
    <property type="term" value="F:UDP-N-acetylmuramoylalanine-D-glutamate ligase activity"/>
    <property type="evidence" value="ECO:0007669"/>
    <property type="project" value="UniProtKB-UniRule"/>
</dbReference>
<dbReference type="GO" id="GO:0051301">
    <property type="term" value="P:cell division"/>
    <property type="evidence" value="ECO:0007669"/>
    <property type="project" value="UniProtKB-KW"/>
</dbReference>
<dbReference type="GO" id="GO:0071555">
    <property type="term" value="P:cell wall organization"/>
    <property type="evidence" value="ECO:0007669"/>
    <property type="project" value="UniProtKB-KW"/>
</dbReference>
<dbReference type="GO" id="GO:0009252">
    <property type="term" value="P:peptidoglycan biosynthetic process"/>
    <property type="evidence" value="ECO:0007669"/>
    <property type="project" value="UniProtKB-UniRule"/>
</dbReference>
<dbReference type="GO" id="GO:0008360">
    <property type="term" value="P:regulation of cell shape"/>
    <property type="evidence" value="ECO:0007669"/>
    <property type="project" value="UniProtKB-KW"/>
</dbReference>
<dbReference type="Gene3D" id="3.90.190.20">
    <property type="entry name" value="Mur ligase, C-terminal domain"/>
    <property type="match status" value="1"/>
</dbReference>
<dbReference type="Gene3D" id="3.40.1190.10">
    <property type="entry name" value="Mur-like, catalytic domain"/>
    <property type="match status" value="1"/>
</dbReference>
<dbReference type="Gene3D" id="3.40.50.720">
    <property type="entry name" value="NAD(P)-binding Rossmann-like Domain"/>
    <property type="match status" value="1"/>
</dbReference>
<dbReference type="HAMAP" id="MF_00639">
    <property type="entry name" value="MurD"/>
    <property type="match status" value="1"/>
</dbReference>
<dbReference type="InterPro" id="IPR036565">
    <property type="entry name" value="Mur-like_cat_sf"/>
</dbReference>
<dbReference type="InterPro" id="IPR004101">
    <property type="entry name" value="Mur_ligase_C"/>
</dbReference>
<dbReference type="InterPro" id="IPR036615">
    <property type="entry name" value="Mur_ligase_C_dom_sf"/>
</dbReference>
<dbReference type="InterPro" id="IPR013221">
    <property type="entry name" value="Mur_ligase_cen"/>
</dbReference>
<dbReference type="InterPro" id="IPR005762">
    <property type="entry name" value="MurD"/>
</dbReference>
<dbReference type="NCBIfam" id="TIGR01087">
    <property type="entry name" value="murD"/>
    <property type="match status" value="1"/>
</dbReference>
<dbReference type="PANTHER" id="PTHR43692">
    <property type="entry name" value="UDP-N-ACETYLMURAMOYLALANINE--D-GLUTAMATE LIGASE"/>
    <property type="match status" value="1"/>
</dbReference>
<dbReference type="PANTHER" id="PTHR43692:SF1">
    <property type="entry name" value="UDP-N-ACETYLMURAMOYLALANINE--D-GLUTAMATE LIGASE"/>
    <property type="match status" value="1"/>
</dbReference>
<dbReference type="Pfam" id="PF02875">
    <property type="entry name" value="Mur_ligase_C"/>
    <property type="match status" value="1"/>
</dbReference>
<dbReference type="Pfam" id="PF08245">
    <property type="entry name" value="Mur_ligase_M"/>
    <property type="match status" value="1"/>
</dbReference>
<dbReference type="Pfam" id="PF21799">
    <property type="entry name" value="MurD-like_N"/>
    <property type="match status" value="1"/>
</dbReference>
<dbReference type="SUPFAM" id="SSF51984">
    <property type="entry name" value="MurCD N-terminal domain"/>
    <property type="match status" value="1"/>
</dbReference>
<dbReference type="SUPFAM" id="SSF53623">
    <property type="entry name" value="MurD-like peptide ligases, catalytic domain"/>
    <property type="match status" value="1"/>
</dbReference>
<dbReference type="SUPFAM" id="SSF53244">
    <property type="entry name" value="MurD-like peptide ligases, peptide-binding domain"/>
    <property type="match status" value="1"/>
</dbReference>